<accession>P0CB98</accession>
<accession>Q0MQI1</accession>
<accession>Q5RC57</accession>
<gene>
    <name type="primary">NDUFS8</name>
</gene>
<dbReference type="EC" id="7.1.1.2" evidence="1"/>
<dbReference type="EMBL" id="DQ885653">
    <property type="protein sequence ID" value="ABH12162.1"/>
    <property type="molecule type" value="mRNA"/>
</dbReference>
<dbReference type="SMR" id="P0CB98"/>
<dbReference type="GO" id="GO:0005743">
    <property type="term" value="C:mitochondrial inner membrane"/>
    <property type="evidence" value="ECO:0000250"/>
    <property type="project" value="UniProtKB"/>
</dbReference>
<dbReference type="GO" id="GO:0005739">
    <property type="term" value="C:mitochondrion"/>
    <property type="evidence" value="ECO:0000250"/>
    <property type="project" value="UniProtKB"/>
</dbReference>
<dbReference type="GO" id="GO:0045271">
    <property type="term" value="C:respiratory chain complex I"/>
    <property type="evidence" value="ECO:0000250"/>
    <property type="project" value="UniProtKB"/>
</dbReference>
<dbReference type="GO" id="GO:0051539">
    <property type="term" value="F:4 iron, 4 sulfur cluster binding"/>
    <property type="evidence" value="ECO:0007669"/>
    <property type="project" value="UniProtKB-KW"/>
</dbReference>
<dbReference type="GO" id="GO:0046872">
    <property type="term" value="F:metal ion binding"/>
    <property type="evidence" value="ECO:0007669"/>
    <property type="project" value="UniProtKB-KW"/>
</dbReference>
<dbReference type="GO" id="GO:0008137">
    <property type="term" value="F:NADH dehydrogenase (ubiquinone) activity"/>
    <property type="evidence" value="ECO:0000250"/>
    <property type="project" value="UniProtKB"/>
</dbReference>
<dbReference type="GO" id="GO:0006120">
    <property type="term" value="P:mitochondrial electron transport, NADH to ubiquinone"/>
    <property type="evidence" value="ECO:0000250"/>
    <property type="project" value="UniProtKB"/>
</dbReference>
<dbReference type="GO" id="GO:0032981">
    <property type="term" value="P:mitochondrial respiratory chain complex I assembly"/>
    <property type="evidence" value="ECO:0000250"/>
    <property type="project" value="UniProtKB"/>
</dbReference>
<dbReference type="FunFam" id="3.30.70.3270:FF:000001">
    <property type="entry name" value="NADH-quinone oxidoreductase subunit I 1"/>
    <property type="match status" value="1"/>
</dbReference>
<dbReference type="Gene3D" id="3.30.70.3270">
    <property type="match status" value="1"/>
</dbReference>
<dbReference type="HAMAP" id="MF_01351">
    <property type="entry name" value="NDH1_NuoI"/>
    <property type="match status" value="1"/>
</dbReference>
<dbReference type="InterPro" id="IPR017896">
    <property type="entry name" value="4Fe4S_Fe-S-bd"/>
</dbReference>
<dbReference type="InterPro" id="IPR017900">
    <property type="entry name" value="4Fe4S_Fe_S_CS"/>
</dbReference>
<dbReference type="InterPro" id="IPR010226">
    <property type="entry name" value="NADH_quinone_OxRdtase_chainI"/>
</dbReference>
<dbReference type="NCBIfam" id="TIGR01971">
    <property type="entry name" value="NuoI"/>
    <property type="match status" value="1"/>
</dbReference>
<dbReference type="NCBIfam" id="NF004538">
    <property type="entry name" value="PRK05888.1-4"/>
    <property type="match status" value="1"/>
</dbReference>
<dbReference type="NCBIfam" id="NF004539">
    <property type="entry name" value="PRK05888.1-5"/>
    <property type="match status" value="1"/>
</dbReference>
<dbReference type="PANTHER" id="PTHR10849:SF20">
    <property type="entry name" value="NADH DEHYDROGENASE [UBIQUINONE] IRON-SULFUR PROTEIN 8, MITOCHONDRIAL"/>
    <property type="match status" value="1"/>
</dbReference>
<dbReference type="PANTHER" id="PTHR10849">
    <property type="entry name" value="NADH DEHYDROGENASE UBIQUINONE IRON-SULFUR PROTEIN 8, MITOCHONDRIAL"/>
    <property type="match status" value="1"/>
</dbReference>
<dbReference type="Pfam" id="PF12838">
    <property type="entry name" value="Fer4_7"/>
    <property type="match status" value="1"/>
</dbReference>
<dbReference type="SUPFAM" id="SSF54862">
    <property type="entry name" value="4Fe-4S ferredoxins"/>
    <property type="match status" value="1"/>
</dbReference>
<dbReference type="PROSITE" id="PS00198">
    <property type="entry name" value="4FE4S_FER_1"/>
    <property type="match status" value="2"/>
</dbReference>
<dbReference type="PROSITE" id="PS51379">
    <property type="entry name" value="4FE4S_FER_2"/>
    <property type="match status" value="2"/>
</dbReference>
<comment type="function">
    <text evidence="1">Core subunit of the mitochondrial membrane respiratory chain NADH dehydrogenase (Complex I) which catalyzes electron transfer from NADH through the respiratory chain, using ubiquinone as an electron acceptor (By similarity). Essential for the catalytic activity and assembly of complex I (By similarity).</text>
</comment>
<comment type="catalytic activity">
    <reaction evidence="1">
        <text>a ubiquinone + NADH + 5 H(+)(in) = a ubiquinol + NAD(+) + 4 H(+)(out)</text>
        <dbReference type="Rhea" id="RHEA:29091"/>
        <dbReference type="Rhea" id="RHEA-COMP:9565"/>
        <dbReference type="Rhea" id="RHEA-COMP:9566"/>
        <dbReference type="ChEBI" id="CHEBI:15378"/>
        <dbReference type="ChEBI" id="CHEBI:16389"/>
        <dbReference type="ChEBI" id="CHEBI:17976"/>
        <dbReference type="ChEBI" id="CHEBI:57540"/>
        <dbReference type="ChEBI" id="CHEBI:57945"/>
        <dbReference type="EC" id="7.1.1.2"/>
    </reaction>
</comment>
<comment type="cofactor">
    <cofactor evidence="3">
        <name>[4Fe-4S] cluster</name>
        <dbReference type="ChEBI" id="CHEBI:49883"/>
    </cofactor>
    <text evidence="3">Binds 2 [4Fe-4S] cluster.</text>
</comment>
<comment type="subunit">
    <text evidence="1 2">Core subunit of respiratory chain NADH dehydrogenase (Complex I) which is composed of 45 different subunits (By similarity). This is a component of the iron-sulfur (IP) fragment of the enzyme (By similarity). Interacts with RAB5IF (By similarity).</text>
</comment>
<comment type="subcellular location">
    <subcellularLocation>
        <location evidence="2">Mitochondrion inner membrane</location>
        <topology evidence="2">Peripheral membrane protein</topology>
        <orientation evidence="2">Matrix side</orientation>
    </subcellularLocation>
</comment>
<comment type="similarity">
    <text evidence="6">Belongs to the complex I 23 kDa subunit family.</text>
</comment>
<organism>
    <name type="scientific">Pongo pygmaeus</name>
    <name type="common">Bornean orangutan</name>
    <dbReference type="NCBI Taxonomy" id="9600"/>
    <lineage>
        <taxon>Eukaryota</taxon>
        <taxon>Metazoa</taxon>
        <taxon>Chordata</taxon>
        <taxon>Craniata</taxon>
        <taxon>Vertebrata</taxon>
        <taxon>Euteleostomi</taxon>
        <taxon>Mammalia</taxon>
        <taxon>Eutheria</taxon>
        <taxon>Euarchontoglires</taxon>
        <taxon>Primates</taxon>
        <taxon>Haplorrhini</taxon>
        <taxon>Catarrhini</taxon>
        <taxon>Hominidae</taxon>
        <taxon>Pongo</taxon>
    </lineage>
</organism>
<keyword id="KW-0004">4Fe-4S</keyword>
<keyword id="KW-0249">Electron transport</keyword>
<keyword id="KW-0408">Iron</keyword>
<keyword id="KW-0411">Iron-sulfur</keyword>
<keyword id="KW-0472">Membrane</keyword>
<keyword id="KW-0479">Metal-binding</keyword>
<keyword id="KW-0496">Mitochondrion</keyword>
<keyword id="KW-0999">Mitochondrion inner membrane</keyword>
<keyword id="KW-0520">NAD</keyword>
<keyword id="KW-0560">Oxidoreductase</keyword>
<keyword id="KW-0677">Repeat</keyword>
<keyword id="KW-0679">Respiratory chain</keyword>
<keyword id="KW-0809">Transit peptide</keyword>
<keyword id="KW-1278">Translocase</keyword>
<keyword id="KW-0813">Transport</keyword>
<keyword id="KW-0830">Ubiquinone</keyword>
<feature type="transit peptide" description="Mitochondrion" evidence="4">
    <location>
        <begin position="1"/>
        <end position="34"/>
    </location>
</feature>
<feature type="chain" id="PRO_0000389267" description="NADH dehydrogenase [ubiquinone] iron-sulfur protein 8, mitochondrial">
    <location>
        <begin position="35"/>
        <end position="210"/>
    </location>
</feature>
<feature type="domain" description="4Fe-4S ferredoxin-type 1" evidence="5">
    <location>
        <begin position="102"/>
        <end position="131"/>
    </location>
</feature>
<feature type="domain" description="4Fe-4S ferredoxin-type 2" evidence="5">
    <location>
        <begin position="141"/>
        <end position="170"/>
    </location>
</feature>
<feature type="binding site" evidence="5">
    <location>
        <position position="111"/>
    </location>
    <ligand>
        <name>[4Fe-4S] cluster</name>
        <dbReference type="ChEBI" id="CHEBI:49883"/>
        <label>1</label>
    </ligand>
</feature>
<feature type="binding site" evidence="5">
    <location>
        <position position="114"/>
    </location>
    <ligand>
        <name>[4Fe-4S] cluster</name>
        <dbReference type="ChEBI" id="CHEBI:49883"/>
        <label>1</label>
    </ligand>
</feature>
<feature type="binding site" evidence="5">
    <location>
        <position position="117"/>
    </location>
    <ligand>
        <name>[4Fe-4S] cluster</name>
        <dbReference type="ChEBI" id="CHEBI:49883"/>
        <label>1</label>
    </ligand>
</feature>
<feature type="binding site" evidence="5">
    <location>
        <position position="121"/>
    </location>
    <ligand>
        <name>[4Fe-4S] cluster</name>
        <dbReference type="ChEBI" id="CHEBI:49883"/>
        <label>2</label>
    </ligand>
</feature>
<feature type="binding site" evidence="5">
    <location>
        <position position="150"/>
    </location>
    <ligand>
        <name>[4Fe-4S] cluster</name>
        <dbReference type="ChEBI" id="CHEBI:49883"/>
        <label>2</label>
    </ligand>
</feature>
<feature type="binding site" evidence="5">
    <location>
        <position position="153"/>
    </location>
    <ligand>
        <name>[4Fe-4S] cluster</name>
        <dbReference type="ChEBI" id="CHEBI:49883"/>
        <label>2</label>
    </ligand>
</feature>
<feature type="binding site" evidence="5">
    <location>
        <position position="156"/>
    </location>
    <ligand>
        <name>[4Fe-4S] cluster</name>
        <dbReference type="ChEBI" id="CHEBI:49883"/>
        <label>2</label>
    </ligand>
</feature>
<feature type="binding site" evidence="5">
    <location>
        <position position="160"/>
    </location>
    <ligand>
        <name>[4Fe-4S] cluster</name>
        <dbReference type="ChEBI" id="CHEBI:49883"/>
        <label>1</label>
    </ligand>
</feature>
<reference key="1">
    <citation type="journal article" date="2006" name="Gene">
        <title>Adaptive selection of mitochondrial complex I subunits during primate radiation.</title>
        <authorList>
            <person name="Mishmar D."/>
            <person name="Ruiz-Pesini E."/>
            <person name="Mondragon-Palomino M."/>
            <person name="Procaccio V."/>
            <person name="Gaut B."/>
            <person name="Wallace D.C."/>
        </authorList>
    </citation>
    <scope>NUCLEOTIDE SEQUENCE [MRNA]</scope>
</reference>
<proteinExistence type="evidence at transcript level"/>
<evidence type="ECO:0000250" key="1">
    <source>
        <dbReference type="UniProtKB" id="O00217"/>
    </source>
</evidence>
<evidence type="ECO:0000250" key="2">
    <source>
        <dbReference type="UniProtKB" id="P42028"/>
    </source>
</evidence>
<evidence type="ECO:0000250" key="3">
    <source>
        <dbReference type="UniProtKB" id="Q56224"/>
    </source>
</evidence>
<evidence type="ECO:0000255" key="4"/>
<evidence type="ECO:0000255" key="5">
    <source>
        <dbReference type="PROSITE-ProRule" id="PRU00711"/>
    </source>
</evidence>
<evidence type="ECO:0000305" key="6"/>
<protein>
    <recommendedName>
        <fullName>NADH dehydrogenase [ubiquinone] iron-sulfur protein 8, mitochondrial</fullName>
        <ecNumber evidence="1">7.1.1.2</ecNumber>
    </recommendedName>
    <alternativeName>
        <fullName>Complex I-23kD</fullName>
        <shortName>CI-23kD</shortName>
    </alternativeName>
    <alternativeName>
        <fullName>NADH-ubiquinone oxidoreductase 23 kDa subunit</fullName>
    </alternativeName>
</protein>
<sequence length="210" mass="23705">MRCLTTPMLLRALAQAARAGPPGGRSLHSSAVAATYKYVNMQDPEMDMKSVTDRAARTLLWTELFRGLGMTLSYLFREPATINYPFEKGPLSPRFRGEHALRRYPSGEERCIACKLCEAICPAQAITIEAEPRADGSRRTTRYDIDMTKCIYCGFCQEACPVDAIVEGPNFEFSTETHEELLYNKEKLLNNGDKWEAEIAANIQADYLYR</sequence>
<name>NDUS8_PONPY</name>